<proteinExistence type="evidence at protein level"/>
<comment type="function">
    <text evidence="1">May be involved in transcriptional regulation.</text>
</comment>
<comment type="subcellular location">
    <subcellularLocation>
        <location evidence="4">Nucleus</location>
    </subcellularLocation>
</comment>
<comment type="similarity">
    <text evidence="4">Belongs to the krueppel C2H2-type zinc-finger protein family.</text>
</comment>
<accession>C9JN71</accession>
<reference key="1">
    <citation type="journal article" date="2004" name="Nature">
        <title>The DNA sequence and biology of human chromosome 19.</title>
        <authorList>
            <person name="Grimwood J."/>
            <person name="Gordon L.A."/>
            <person name="Olsen A.S."/>
            <person name="Terry A."/>
            <person name="Schmutz J."/>
            <person name="Lamerdin J.E."/>
            <person name="Hellsten U."/>
            <person name="Goodstein D."/>
            <person name="Couronne O."/>
            <person name="Tran-Gyamfi M."/>
            <person name="Aerts A."/>
            <person name="Altherr M."/>
            <person name="Ashworth L."/>
            <person name="Bajorek E."/>
            <person name="Black S."/>
            <person name="Branscomb E."/>
            <person name="Caenepeel S."/>
            <person name="Carrano A.V."/>
            <person name="Caoile C."/>
            <person name="Chan Y.M."/>
            <person name="Christensen M."/>
            <person name="Cleland C.A."/>
            <person name="Copeland A."/>
            <person name="Dalin E."/>
            <person name="Dehal P."/>
            <person name="Denys M."/>
            <person name="Detter J.C."/>
            <person name="Escobar J."/>
            <person name="Flowers D."/>
            <person name="Fotopulos D."/>
            <person name="Garcia C."/>
            <person name="Georgescu A.M."/>
            <person name="Glavina T."/>
            <person name="Gomez M."/>
            <person name="Gonzales E."/>
            <person name="Groza M."/>
            <person name="Hammon N."/>
            <person name="Hawkins T."/>
            <person name="Haydu L."/>
            <person name="Ho I."/>
            <person name="Huang W."/>
            <person name="Israni S."/>
            <person name="Jett J."/>
            <person name="Kadner K."/>
            <person name="Kimball H."/>
            <person name="Kobayashi A."/>
            <person name="Larionov V."/>
            <person name="Leem S.-H."/>
            <person name="Lopez F."/>
            <person name="Lou Y."/>
            <person name="Lowry S."/>
            <person name="Malfatti S."/>
            <person name="Martinez D."/>
            <person name="McCready P.M."/>
            <person name="Medina C."/>
            <person name="Morgan J."/>
            <person name="Nelson K."/>
            <person name="Nolan M."/>
            <person name="Ovcharenko I."/>
            <person name="Pitluck S."/>
            <person name="Pollard M."/>
            <person name="Popkie A.P."/>
            <person name="Predki P."/>
            <person name="Quan G."/>
            <person name="Ramirez L."/>
            <person name="Rash S."/>
            <person name="Retterer J."/>
            <person name="Rodriguez A."/>
            <person name="Rogers S."/>
            <person name="Salamov A."/>
            <person name="Salazar A."/>
            <person name="She X."/>
            <person name="Smith D."/>
            <person name="Slezak T."/>
            <person name="Solovyev V."/>
            <person name="Thayer N."/>
            <person name="Tice H."/>
            <person name="Tsai M."/>
            <person name="Ustaszewska A."/>
            <person name="Vo N."/>
            <person name="Wagner M."/>
            <person name="Wheeler J."/>
            <person name="Wu K."/>
            <person name="Xie G."/>
            <person name="Yang J."/>
            <person name="Dubchak I."/>
            <person name="Furey T.S."/>
            <person name="DeJong P."/>
            <person name="Dickson M."/>
            <person name="Gordon D."/>
            <person name="Eichler E.E."/>
            <person name="Pennacchio L.A."/>
            <person name="Richardson P."/>
            <person name="Stubbs L."/>
            <person name="Rokhsar D.S."/>
            <person name="Myers R.M."/>
            <person name="Rubin E.M."/>
            <person name="Lucas S.M."/>
        </authorList>
    </citation>
    <scope>NUCLEOTIDE SEQUENCE [LARGE SCALE GENOMIC DNA]</scope>
</reference>
<dbReference type="EMBL" id="AC022415">
    <property type="status" value="NOT_ANNOTATED_CDS"/>
    <property type="molecule type" value="Genomic_DNA"/>
</dbReference>
<dbReference type="CCDS" id="CCDS45984.2"/>
<dbReference type="RefSeq" id="NP_001073873.2">
    <property type="nucleotide sequence ID" value="NM_001080404.3"/>
</dbReference>
<dbReference type="SMR" id="C9JN71"/>
<dbReference type="BioGRID" id="610144">
    <property type="interactions" value="4"/>
</dbReference>
<dbReference type="FunCoup" id="C9JN71">
    <property type="interactions" value="335"/>
</dbReference>
<dbReference type="IntAct" id="C9JN71">
    <property type="interactions" value="1"/>
</dbReference>
<dbReference type="STRING" id="9606.ENSP00000447931"/>
<dbReference type="iPTMnet" id="C9JN71"/>
<dbReference type="PhosphoSitePlus" id="C9JN71"/>
<dbReference type="BioMuta" id="ZNF878"/>
<dbReference type="jPOST" id="C9JN71"/>
<dbReference type="MassIVE" id="C9JN71"/>
<dbReference type="PaxDb" id="9606-ENSP00000447931"/>
<dbReference type="PeptideAtlas" id="C9JN71"/>
<dbReference type="ProteomicsDB" id="10937"/>
<dbReference type="Antibodypedia" id="62880">
    <property type="antibodies" value="5 antibodies from 5 providers"/>
</dbReference>
<dbReference type="DNASU" id="729747"/>
<dbReference type="Ensembl" id="ENST00000547628.2">
    <property type="protein sequence ID" value="ENSP00000447931.1"/>
    <property type="gene ID" value="ENSG00000257446.4"/>
</dbReference>
<dbReference type="GeneID" id="729747"/>
<dbReference type="KEGG" id="hsa:729747"/>
<dbReference type="MANE-Select" id="ENST00000547628.2">
    <property type="protein sequence ID" value="ENSP00000447931.1"/>
    <property type="RefSeq nucleotide sequence ID" value="NM_001080404.3"/>
    <property type="RefSeq protein sequence ID" value="NP_001073873.2"/>
</dbReference>
<dbReference type="UCSC" id="uc021upl.2">
    <property type="organism name" value="human"/>
</dbReference>
<dbReference type="AGR" id="HGNC:37246"/>
<dbReference type="CTD" id="729747"/>
<dbReference type="GeneCards" id="ZNF878"/>
<dbReference type="HGNC" id="HGNC:37246">
    <property type="gene designation" value="ZNF878"/>
</dbReference>
<dbReference type="HPA" id="ENSG00000257446">
    <property type="expression patterns" value="Low tissue specificity"/>
</dbReference>
<dbReference type="neXtProt" id="NX_C9JN71"/>
<dbReference type="OpenTargets" id="ENSG00000257446"/>
<dbReference type="PharmGKB" id="PA165395055"/>
<dbReference type="VEuPathDB" id="HostDB:ENSG00000257446"/>
<dbReference type="eggNOG" id="KOG1721">
    <property type="taxonomic scope" value="Eukaryota"/>
</dbReference>
<dbReference type="GeneTree" id="ENSGT00950000182755"/>
<dbReference type="HOGENOM" id="CLU_002678_44_17_1"/>
<dbReference type="InParanoid" id="C9JN71"/>
<dbReference type="OMA" id="FRYHEKT"/>
<dbReference type="OrthoDB" id="3156061at2759"/>
<dbReference type="PAN-GO" id="C9JN71">
    <property type="GO annotations" value="4 GO annotations based on evolutionary models"/>
</dbReference>
<dbReference type="PhylomeDB" id="C9JN71"/>
<dbReference type="TreeFam" id="TF338854"/>
<dbReference type="PathwayCommons" id="C9JN71"/>
<dbReference type="SignaLink" id="C9JN71"/>
<dbReference type="BioGRID-ORCS" id="729747">
    <property type="hits" value="16 hits in 1128 CRISPR screens"/>
</dbReference>
<dbReference type="GenomeRNAi" id="729747"/>
<dbReference type="Pharos" id="C9JN71">
    <property type="development level" value="Tdark"/>
</dbReference>
<dbReference type="PRO" id="PR:C9JN71"/>
<dbReference type="Proteomes" id="UP000005640">
    <property type="component" value="Chromosome 19"/>
</dbReference>
<dbReference type="RNAct" id="C9JN71">
    <property type="molecule type" value="protein"/>
</dbReference>
<dbReference type="Bgee" id="ENSG00000257446">
    <property type="expression patterns" value="Expressed in male germ line stem cell (sensu Vertebrata) in testis and 91 other cell types or tissues"/>
</dbReference>
<dbReference type="GO" id="GO:0005634">
    <property type="term" value="C:nucleus"/>
    <property type="evidence" value="ECO:0000318"/>
    <property type="project" value="GO_Central"/>
</dbReference>
<dbReference type="GO" id="GO:0000981">
    <property type="term" value="F:DNA-binding transcription factor activity, RNA polymerase II-specific"/>
    <property type="evidence" value="ECO:0000318"/>
    <property type="project" value="GO_Central"/>
</dbReference>
<dbReference type="GO" id="GO:0000977">
    <property type="term" value="F:RNA polymerase II transcription regulatory region sequence-specific DNA binding"/>
    <property type="evidence" value="ECO:0000318"/>
    <property type="project" value="GO_Central"/>
</dbReference>
<dbReference type="GO" id="GO:0008270">
    <property type="term" value="F:zinc ion binding"/>
    <property type="evidence" value="ECO:0007669"/>
    <property type="project" value="UniProtKB-KW"/>
</dbReference>
<dbReference type="GO" id="GO:0006357">
    <property type="term" value="P:regulation of transcription by RNA polymerase II"/>
    <property type="evidence" value="ECO:0000318"/>
    <property type="project" value="GO_Central"/>
</dbReference>
<dbReference type="CDD" id="cd07765">
    <property type="entry name" value="KRAB_A-box"/>
    <property type="match status" value="1"/>
</dbReference>
<dbReference type="FunFam" id="3.30.160.60:FF:004241">
    <property type="match status" value="1"/>
</dbReference>
<dbReference type="FunFam" id="3.30.160.60:FF:000193">
    <property type="entry name" value="Zinc finger protein 300"/>
    <property type="match status" value="1"/>
</dbReference>
<dbReference type="FunFam" id="3.30.160.60:FF:000184">
    <property type="entry name" value="Zinc finger protein 333"/>
    <property type="match status" value="4"/>
</dbReference>
<dbReference type="FunFam" id="3.30.160.60:FF:002343">
    <property type="entry name" value="Zinc finger protein 33A"/>
    <property type="match status" value="1"/>
</dbReference>
<dbReference type="FunFam" id="3.30.160.60:FF:002254">
    <property type="entry name" value="Zinc finger protein 540"/>
    <property type="match status" value="3"/>
</dbReference>
<dbReference type="FunFam" id="3.30.160.60:FF:000371">
    <property type="entry name" value="Zinc finger protein 555"/>
    <property type="match status" value="2"/>
</dbReference>
<dbReference type="FunFam" id="3.30.160.60:FF:001254">
    <property type="entry name" value="Zinc finger protein 564"/>
    <property type="match status" value="1"/>
</dbReference>
<dbReference type="FunFam" id="3.30.160.60:FF:000156">
    <property type="entry name" value="Zinc finger protein 568"/>
    <property type="match status" value="1"/>
</dbReference>
<dbReference type="Gene3D" id="6.10.140.140">
    <property type="match status" value="1"/>
</dbReference>
<dbReference type="Gene3D" id="3.30.160.60">
    <property type="entry name" value="Classic Zinc Finger"/>
    <property type="match status" value="15"/>
</dbReference>
<dbReference type="InterPro" id="IPR001909">
    <property type="entry name" value="KRAB"/>
</dbReference>
<dbReference type="InterPro" id="IPR036051">
    <property type="entry name" value="KRAB_dom_sf"/>
</dbReference>
<dbReference type="InterPro" id="IPR036236">
    <property type="entry name" value="Znf_C2H2_sf"/>
</dbReference>
<dbReference type="InterPro" id="IPR013087">
    <property type="entry name" value="Znf_C2H2_type"/>
</dbReference>
<dbReference type="PANTHER" id="PTHR24381">
    <property type="entry name" value="ZINC FINGER PROTEIN"/>
    <property type="match status" value="1"/>
</dbReference>
<dbReference type="PANTHER" id="PTHR24381:SF446">
    <property type="entry name" value="ZINC FINGER PROTEIN 555"/>
    <property type="match status" value="1"/>
</dbReference>
<dbReference type="Pfam" id="PF01352">
    <property type="entry name" value="KRAB"/>
    <property type="match status" value="1"/>
</dbReference>
<dbReference type="Pfam" id="PF00096">
    <property type="entry name" value="zf-C2H2"/>
    <property type="match status" value="13"/>
</dbReference>
<dbReference type="SMART" id="SM00349">
    <property type="entry name" value="KRAB"/>
    <property type="match status" value="1"/>
</dbReference>
<dbReference type="SMART" id="SM00355">
    <property type="entry name" value="ZnF_C2H2"/>
    <property type="match status" value="14"/>
</dbReference>
<dbReference type="SUPFAM" id="SSF57667">
    <property type="entry name" value="beta-beta-alpha zinc fingers"/>
    <property type="match status" value="8"/>
</dbReference>
<dbReference type="SUPFAM" id="SSF109640">
    <property type="entry name" value="KRAB domain (Kruppel-associated box)"/>
    <property type="match status" value="1"/>
</dbReference>
<dbReference type="PROSITE" id="PS50805">
    <property type="entry name" value="KRAB"/>
    <property type="match status" value="1"/>
</dbReference>
<dbReference type="PROSITE" id="PS00028">
    <property type="entry name" value="ZINC_FINGER_C2H2_1"/>
    <property type="match status" value="14"/>
</dbReference>
<dbReference type="PROSITE" id="PS50157">
    <property type="entry name" value="ZINC_FINGER_C2H2_2"/>
    <property type="match status" value="15"/>
</dbReference>
<organism>
    <name type="scientific">Homo sapiens</name>
    <name type="common">Human</name>
    <dbReference type="NCBI Taxonomy" id="9606"/>
    <lineage>
        <taxon>Eukaryota</taxon>
        <taxon>Metazoa</taxon>
        <taxon>Chordata</taxon>
        <taxon>Craniata</taxon>
        <taxon>Vertebrata</taxon>
        <taxon>Euteleostomi</taxon>
        <taxon>Mammalia</taxon>
        <taxon>Eutheria</taxon>
        <taxon>Euarchontoglires</taxon>
        <taxon>Primates</taxon>
        <taxon>Haplorrhini</taxon>
        <taxon>Catarrhini</taxon>
        <taxon>Hominidae</taxon>
        <taxon>Homo</taxon>
    </lineage>
</organism>
<keyword id="KW-0479">Metal-binding</keyword>
<keyword id="KW-0539">Nucleus</keyword>
<keyword id="KW-1267">Proteomics identification</keyword>
<keyword id="KW-1185">Reference proteome</keyword>
<keyword id="KW-0677">Repeat</keyword>
<keyword id="KW-0804">Transcription</keyword>
<keyword id="KW-0805">Transcription regulation</keyword>
<keyword id="KW-0862">Zinc</keyword>
<keyword id="KW-0863">Zinc-finger</keyword>
<protein>
    <recommendedName>
        <fullName>Zinc finger protein 878</fullName>
    </recommendedName>
</protein>
<gene>
    <name type="primary">ZNF878</name>
</gene>
<feature type="chain" id="PRO_0000393952" description="Zinc finger protein 878">
    <location>
        <begin position="1"/>
        <end position="531"/>
    </location>
</feature>
<feature type="domain" description="KRAB" evidence="3">
    <location>
        <begin position="4"/>
        <end position="90"/>
    </location>
</feature>
<feature type="zinc finger region" description="C2H2-type 1; degenerate" evidence="2">
    <location>
        <begin position="122"/>
        <end position="137"/>
    </location>
</feature>
<feature type="zinc finger region" description="C2H2-type 2" evidence="2">
    <location>
        <begin position="143"/>
        <end position="165"/>
    </location>
</feature>
<feature type="zinc finger region" description="C2H2-type 3" evidence="2">
    <location>
        <begin position="171"/>
        <end position="193"/>
    </location>
</feature>
<feature type="zinc finger region" description="C2H2-type 4" evidence="2">
    <location>
        <begin position="199"/>
        <end position="221"/>
    </location>
</feature>
<feature type="zinc finger region" description="C2H2-type 5" evidence="2">
    <location>
        <begin position="227"/>
        <end position="249"/>
    </location>
</feature>
<feature type="zinc finger region" description="C2H2-type 6" evidence="2">
    <location>
        <begin position="255"/>
        <end position="277"/>
    </location>
</feature>
<feature type="zinc finger region" description="C2H2-type 7" evidence="2">
    <location>
        <begin position="283"/>
        <end position="305"/>
    </location>
</feature>
<feature type="zinc finger region" description="C2H2-type 8" evidence="2">
    <location>
        <begin position="311"/>
        <end position="333"/>
    </location>
</feature>
<feature type="zinc finger region" description="C2H2-type 9" evidence="2">
    <location>
        <begin position="339"/>
        <end position="361"/>
    </location>
</feature>
<feature type="zinc finger region" description="C2H2-type 10" evidence="2">
    <location>
        <begin position="367"/>
        <end position="389"/>
    </location>
</feature>
<feature type="zinc finger region" description="C2H2-type 11" evidence="2">
    <location>
        <begin position="395"/>
        <end position="417"/>
    </location>
</feature>
<feature type="zinc finger region" description="C2H2-type 12" evidence="2">
    <location>
        <begin position="423"/>
        <end position="445"/>
    </location>
</feature>
<feature type="zinc finger region" description="C2H2-type 13" evidence="2">
    <location>
        <begin position="451"/>
        <end position="473"/>
    </location>
</feature>
<feature type="zinc finger region" description="C2H2-type 14" evidence="2">
    <location>
        <begin position="479"/>
        <end position="501"/>
    </location>
</feature>
<feature type="zinc finger region" description="C2H2-type 15" evidence="2">
    <location>
        <begin position="507"/>
        <end position="529"/>
    </location>
</feature>
<evidence type="ECO:0000250" key="1"/>
<evidence type="ECO:0000255" key="2">
    <source>
        <dbReference type="PROSITE-ProRule" id="PRU00042"/>
    </source>
</evidence>
<evidence type="ECO:0000255" key="3">
    <source>
        <dbReference type="PROSITE-ProRule" id="PRU00119"/>
    </source>
</evidence>
<evidence type="ECO:0000305" key="4"/>
<sequence length="531" mass="61540">MDSVAFEDVAVNFTQEEWALLDPSQKNLYREVMQETLRNLTSIGKKWNNQYIEDEHQNPRRNLRRLIGERLSESKESHQHGEVLTQVPDDTLKKKTPGVQSYESSVCGEIGIGLSSLNRHLRAFSYSSSLAIHGRTHTGEKPYECKECGKAFRFPSSVRRHERIHSAKKPYECKQCGKAFSFPSSVRRHERIHSAKKPYECKQCGKALSYLVSFQTHMRMHTGERPHKCNICGKAFFSPSSLKRHEKSHTGEKRYKCKQCDKAFNCPSSFQYHERTHSGEKPYECTQCRKAFRSVKYLRVHERKHTGEKPYECKLCGKGFISSTSFRYHEKTHTGEKPYECKKCVKAFSFVKDLRIHERTHTGEKPFECKQCGKTFTSSNSFHYHERTHTGEKPYECKQCGKAFRSASVLQKHIRTHTGEKPYGCKQCGKVFRVASQLKMHERTHTGEKPYECKQCGKAFISSNSIRYHKRTHTGEKPYKCKQCGKAFISSNSFLYHERIHTGEKPYECKQCGKAFRSASILQKHVRTHAG</sequence>
<name>ZN878_HUMAN</name>